<dbReference type="EMBL" id="AB220552">
    <property type="protein sequence ID" value="BAE73085.1"/>
    <property type="molecule type" value="mRNA"/>
</dbReference>
<dbReference type="RefSeq" id="NP_001306528.1">
    <property type="nucleotide sequence ID" value="NM_001319599.1"/>
</dbReference>
<dbReference type="SMR" id="Q2PFN5"/>
<dbReference type="STRING" id="9541.ENSMFAP00000001237"/>
<dbReference type="eggNOG" id="ENOG502QTG8">
    <property type="taxonomic scope" value="Eukaryota"/>
</dbReference>
<dbReference type="Proteomes" id="UP000233100">
    <property type="component" value="Unplaced"/>
</dbReference>
<dbReference type="GO" id="GO:0005829">
    <property type="term" value="C:cytosol"/>
    <property type="evidence" value="ECO:0007669"/>
    <property type="project" value="TreeGrafter"/>
</dbReference>
<dbReference type="GO" id="GO:0005874">
    <property type="term" value="C:microtubule"/>
    <property type="evidence" value="ECO:0007669"/>
    <property type="project" value="UniProtKB-KW"/>
</dbReference>
<dbReference type="GO" id="GO:0032587">
    <property type="term" value="C:ruffle membrane"/>
    <property type="evidence" value="ECO:0007669"/>
    <property type="project" value="UniProtKB-SubCell"/>
</dbReference>
<dbReference type="GO" id="GO:0048513">
    <property type="term" value="P:animal organ development"/>
    <property type="evidence" value="ECO:0007669"/>
    <property type="project" value="TreeGrafter"/>
</dbReference>
<dbReference type="GO" id="GO:0010719">
    <property type="term" value="P:negative regulation of epithelial to mesenchymal transition"/>
    <property type="evidence" value="ECO:0000250"/>
    <property type="project" value="UniProtKB"/>
</dbReference>
<dbReference type="GO" id="GO:0070373">
    <property type="term" value="P:negative regulation of ERK1 and ERK2 cascade"/>
    <property type="evidence" value="ECO:0000250"/>
    <property type="project" value="UniProtKB"/>
</dbReference>
<dbReference type="GO" id="GO:0040037">
    <property type="term" value="P:negative regulation of fibroblast growth factor receptor signaling pathway"/>
    <property type="evidence" value="ECO:0007669"/>
    <property type="project" value="TreeGrafter"/>
</dbReference>
<dbReference type="GO" id="GO:1902747">
    <property type="term" value="P:negative regulation of lens fiber cell differentiation"/>
    <property type="evidence" value="ECO:0000250"/>
    <property type="project" value="UniProtKB"/>
</dbReference>
<dbReference type="GO" id="GO:0031397">
    <property type="term" value="P:negative regulation of protein ubiquitination"/>
    <property type="evidence" value="ECO:0000250"/>
    <property type="project" value="UniProtKB"/>
</dbReference>
<dbReference type="GO" id="GO:0046580">
    <property type="term" value="P:negative regulation of Ras protein signal transduction"/>
    <property type="evidence" value="ECO:0007669"/>
    <property type="project" value="TreeGrafter"/>
</dbReference>
<dbReference type="GO" id="GO:0030512">
    <property type="term" value="P:negative regulation of transforming growth factor beta receptor signaling pathway"/>
    <property type="evidence" value="ECO:0000250"/>
    <property type="project" value="UniProtKB"/>
</dbReference>
<dbReference type="InterPro" id="IPR007875">
    <property type="entry name" value="Sprouty"/>
</dbReference>
<dbReference type="InterPro" id="IPR051192">
    <property type="entry name" value="Sprouty_domain"/>
</dbReference>
<dbReference type="PANTHER" id="PTHR12365:SF8">
    <property type="entry name" value="PROTEIN SPROUTY HOMOLOG 2"/>
    <property type="match status" value="1"/>
</dbReference>
<dbReference type="PANTHER" id="PTHR12365">
    <property type="entry name" value="SPROUTY"/>
    <property type="match status" value="1"/>
</dbReference>
<dbReference type="Pfam" id="PF05210">
    <property type="entry name" value="Sprouty"/>
    <property type="match status" value="1"/>
</dbReference>
<dbReference type="PROSITE" id="PS51227">
    <property type="entry name" value="SPR"/>
    <property type="match status" value="1"/>
</dbReference>
<proteinExistence type="evidence at transcript level"/>
<comment type="function">
    <text evidence="2 3">Antagonist of fibroblast growth factor (FGF) pathways via inhibition of FGF-mediated phosphorylation of ERK1/2 (By similarity). Thereby acts as an antagonist of FGF-induced retinal lens fiber differentiation, may inhibit limb bud outgrowth and may negatively modulate respiratory organogenesis (By similarity). Inhibits TGFB-induced epithelial-to-mesenchymal transition in retinal lens epithelial cells (By similarity). Inhibits CBL/C-CBL-mediated EGFR ubiquitination (By similarity).</text>
</comment>
<comment type="subunit">
    <text evidence="2 3">Forms heterodimers with SPRY1 (By similarity). Forms a tripartite complex containing GAB1, METTL13 and SPRY2 (By similarity). Within the complex interacts with METTL13 (By similarity). Interacts with RAF1 (By similarity). Interacts (via C-terminus) with TESK1 (via C-terminus); the interaction disrupts SPRY2 interaction with GRB2, potentially via disruption of SPRY2 serine dephosphorylation (By similarity). Interacts with PPP2R1A/PP2A-A and PPP2CA/PP2A-C; the interaction with PPP2CA/PP2A-C is inhibited by interaction with TESK1, possibly by vesicular sequestration of SPRY2 (By similarity). Inhibition of the interaction with the serine/threonine-protein phosphatase 2A (PP2A) holoenzyme results in loss of PP2A-mediated dephosphorylation, resulting in the loss of SPRY2 interaction with GRB2 (By similarity). Interacts with GRB2 (By similarity). Interacts with CBL/C-CBL; the interaction inhibits CBL-mediated ubiquitination of EGFR (By similarity). Interacts (via C-terminus) with CAV1 (via C-terminus) (By similarity).</text>
</comment>
<comment type="subcellular location">
    <subcellularLocation>
        <location evidence="2">Cytoplasm</location>
        <location evidence="2">Cytoskeleton</location>
    </subcellularLocation>
    <subcellularLocation>
        <location evidence="2">Cell projection</location>
        <location evidence="2">Ruffle membrane</location>
    </subcellularLocation>
    <text evidence="2">Associated with microtubules in unstimulated cells but is translocated to the membrane ruffles in cells stimulated with EGF (epidermal growth factor).</text>
</comment>
<comment type="domain">
    <text evidence="1">The Cys-rich domain is responsible for the localization of the protein to the membrane ruffles.</text>
</comment>
<comment type="PTM">
    <text evidence="2">Cleaved at Pro-144 by the prolyl endopeptidase FAP (seprase) activity (in vitro).</text>
</comment>
<comment type="similarity">
    <text evidence="6">Belongs to the sprouty family.</text>
</comment>
<name>SPY2_MACFA</name>
<protein>
    <recommendedName>
        <fullName>Protein sprouty homolog 2</fullName>
        <shortName>Spry-2</shortName>
    </recommendedName>
</protein>
<keyword id="KW-1003">Cell membrane</keyword>
<keyword id="KW-0966">Cell projection</keyword>
<keyword id="KW-0963">Cytoplasm</keyword>
<keyword id="KW-0206">Cytoskeleton</keyword>
<keyword id="KW-0217">Developmental protein</keyword>
<keyword id="KW-0472">Membrane</keyword>
<keyword id="KW-0493">Microtubule</keyword>
<keyword id="KW-1185">Reference proteome</keyword>
<accession>Q2PFN5</accession>
<sequence length="315" mass="34616">MEARAQSGNGSQPLLQTPRDGGRQRGEPDPRDALTQQVHVLSLDQIRAIRNTNEYTEGPTVVPRPGLKPAPRPSTQHKHERLHGLPEHRQPPRLQHSQVHSSARAPLSRSISTVSSGSRSSTRTSTSSSSSEQRLLGSSFSSGPVADGIIRVQPKSELKPGELKPLSKEDLGLHAYRCEDCGKCKCKECTYPRPLPSDWICDKQCLCSAQNVIDYGTCVCCVKGLFYHCSNDDGDNCADNPCSCSQSHCCTRWSAMGVMSLFLPCLWCYLPAKGCLKLCQGCYDRVNRPGCRCKNSNTVCCKVPTVPPRNFEKPT</sequence>
<reference key="1">
    <citation type="submission" date="2005-07" db="EMBL/GenBank/DDBJ databases">
        <title>Analysis of gene expression in cynomolgus monkey tissues by macaque cDNA oligo-chips.</title>
        <authorList>
            <person name="Kobayashi M."/>
            <person name="Tanuma R."/>
            <person name="Hirata M."/>
            <person name="Osada N."/>
            <person name="Kusuda J."/>
            <person name="Sugano S."/>
            <person name="Hashimoto K."/>
        </authorList>
    </citation>
    <scope>NUCLEOTIDE SEQUENCE [LARGE SCALE MRNA]</scope>
    <source>
        <tissue>Temporal cortex</tissue>
    </source>
</reference>
<organism>
    <name type="scientific">Macaca fascicularis</name>
    <name type="common">Crab-eating macaque</name>
    <name type="synonym">Cynomolgus monkey</name>
    <dbReference type="NCBI Taxonomy" id="9541"/>
    <lineage>
        <taxon>Eukaryota</taxon>
        <taxon>Metazoa</taxon>
        <taxon>Chordata</taxon>
        <taxon>Craniata</taxon>
        <taxon>Vertebrata</taxon>
        <taxon>Euteleostomi</taxon>
        <taxon>Mammalia</taxon>
        <taxon>Eutheria</taxon>
        <taxon>Euarchontoglires</taxon>
        <taxon>Primates</taxon>
        <taxon>Haplorrhini</taxon>
        <taxon>Catarrhini</taxon>
        <taxon>Cercopithecidae</taxon>
        <taxon>Cercopithecinae</taxon>
        <taxon>Macaca</taxon>
    </lineage>
</organism>
<gene>
    <name type="primary">SPRY2</name>
    <name type="ORF">QtrA-10142</name>
</gene>
<feature type="chain" id="PRO_0000295301" description="Protein sprouty homolog 2">
    <location>
        <begin position="1"/>
        <end position="315"/>
    </location>
</feature>
<feature type="domain" description="SPR" evidence="4">
    <location>
        <begin position="177"/>
        <end position="291"/>
    </location>
</feature>
<feature type="region of interest" description="Disordered" evidence="5">
    <location>
        <begin position="1"/>
        <end position="39"/>
    </location>
</feature>
<feature type="region of interest" description="Disordered" evidence="5">
    <location>
        <begin position="51"/>
        <end position="140"/>
    </location>
</feature>
<feature type="region of interest" description="Required for interaction with CAV1" evidence="3">
    <location>
        <begin position="118"/>
        <end position="315"/>
    </location>
</feature>
<feature type="region of interest" description="Required for interaction with TESK1" evidence="2">
    <location>
        <begin position="178"/>
        <end position="315"/>
    </location>
</feature>
<feature type="compositionally biased region" description="Polar residues" evidence="5">
    <location>
        <begin position="1"/>
        <end position="15"/>
    </location>
</feature>
<feature type="compositionally biased region" description="Basic and acidic residues" evidence="5">
    <location>
        <begin position="20"/>
        <end position="32"/>
    </location>
</feature>
<feature type="compositionally biased region" description="Low complexity" evidence="5">
    <location>
        <begin position="108"/>
        <end position="140"/>
    </location>
</feature>
<feature type="site" description="Cleavage; by FAP" evidence="2">
    <location>
        <begin position="144"/>
        <end position="145"/>
    </location>
</feature>
<evidence type="ECO:0000250" key="1"/>
<evidence type="ECO:0000250" key="2">
    <source>
        <dbReference type="UniProtKB" id="O43597"/>
    </source>
</evidence>
<evidence type="ECO:0000250" key="3">
    <source>
        <dbReference type="UniProtKB" id="Q9QXV8"/>
    </source>
</evidence>
<evidence type="ECO:0000255" key="4">
    <source>
        <dbReference type="PROSITE-ProRule" id="PRU00572"/>
    </source>
</evidence>
<evidence type="ECO:0000256" key="5">
    <source>
        <dbReference type="SAM" id="MobiDB-lite"/>
    </source>
</evidence>
<evidence type="ECO:0000305" key="6"/>